<gene>
    <name type="primary">yedP</name>
    <name type="ordered locus">STY2193</name>
    <name type="ordered locus">t0892</name>
</gene>
<comment type="catalytic activity">
    <reaction evidence="1">
        <text>2-O-(alpha-D-mannosyl)-3-phosphoglycerate + H2O = (2R)-2-O-(alpha-D-mannosyl)-glycerate + phosphate</text>
        <dbReference type="Rhea" id="RHEA:19309"/>
        <dbReference type="ChEBI" id="CHEBI:15377"/>
        <dbReference type="ChEBI" id="CHEBI:43474"/>
        <dbReference type="ChEBI" id="CHEBI:57541"/>
        <dbReference type="ChEBI" id="CHEBI:57744"/>
        <dbReference type="EC" id="3.1.3.70"/>
    </reaction>
</comment>
<comment type="cofactor">
    <cofactor evidence="1">
        <name>Mg(2+)</name>
        <dbReference type="ChEBI" id="CHEBI:18420"/>
    </cofactor>
</comment>
<comment type="subcellular location">
    <subcellularLocation>
        <location evidence="1">Cytoplasm</location>
    </subcellularLocation>
</comment>
<comment type="similarity">
    <text evidence="1">Belongs to the HAD-like hydrolase superfamily. MPGP family.</text>
</comment>
<name>MPGP_SALTI</name>
<accession>P65418</accession>
<accession>Q8XGE1</accession>
<evidence type="ECO:0000255" key="1">
    <source>
        <dbReference type="HAMAP-Rule" id="MF_00617"/>
    </source>
</evidence>
<feature type="chain" id="PRO_0000184978" description="Mannosyl-3-phosphoglycerate phosphatase">
    <location>
        <begin position="1"/>
        <end position="271"/>
    </location>
</feature>
<feature type="active site" description="Nucleophile" evidence="1">
    <location>
        <position position="13"/>
    </location>
</feature>
<feature type="binding site" evidence="1">
    <location>
        <position position="13"/>
    </location>
    <ligand>
        <name>Mg(2+)</name>
        <dbReference type="ChEBI" id="CHEBI:18420"/>
    </ligand>
</feature>
<feature type="binding site" evidence="1">
    <location>
        <position position="15"/>
    </location>
    <ligand>
        <name>Mg(2+)</name>
        <dbReference type="ChEBI" id="CHEBI:18420"/>
    </ligand>
</feature>
<feature type="binding site" evidence="1">
    <location>
        <position position="214"/>
    </location>
    <ligand>
        <name>Mg(2+)</name>
        <dbReference type="ChEBI" id="CHEBI:18420"/>
    </ligand>
</feature>
<reference key="1">
    <citation type="journal article" date="2001" name="Nature">
        <title>Complete genome sequence of a multiple drug resistant Salmonella enterica serovar Typhi CT18.</title>
        <authorList>
            <person name="Parkhill J."/>
            <person name="Dougan G."/>
            <person name="James K.D."/>
            <person name="Thomson N.R."/>
            <person name="Pickard D."/>
            <person name="Wain J."/>
            <person name="Churcher C.M."/>
            <person name="Mungall K.L."/>
            <person name="Bentley S.D."/>
            <person name="Holden M.T.G."/>
            <person name="Sebaihia M."/>
            <person name="Baker S."/>
            <person name="Basham D."/>
            <person name="Brooks K."/>
            <person name="Chillingworth T."/>
            <person name="Connerton P."/>
            <person name="Cronin A."/>
            <person name="Davis P."/>
            <person name="Davies R.M."/>
            <person name="Dowd L."/>
            <person name="White N."/>
            <person name="Farrar J."/>
            <person name="Feltwell T."/>
            <person name="Hamlin N."/>
            <person name="Haque A."/>
            <person name="Hien T.T."/>
            <person name="Holroyd S."/>
            <person name="Jagels K."/>
            <person name="Krogh A."/>
            <person name="Larsen T.S."/>
            <person name="Leather S."/>
            <person name="Moule S."/>
            <person name="O'Gaora P."/>
            <person name="Parry C."/>
            <person name="Quail M.A."/>
            <person name="Rutherford K.M."/>
            <person name="Simmonds M."/>
            <person name="Skelton J."/>
            <person name="Stevens K."/>
            <person name="Whitehead S."/>
            <person name="Barrell B.G."/>
        </authorList>
    </citation>
    <scope>NUCLEOTIDE SEQUENCE [LARGE SCALE GENOMIC DNA]</scope>
    <source>
        <strain>CT18</strain>
    </source>
</reference>
<reference key="2">
    <citation type="journal article" date="2003" name="J. Bacteriol.">
        <title>Comparative genomics of Salmonella enterica serovar Typhi strains Ty2 and CT18.</title>
        <authorList>
            <person name="Deng W."/>
            <person name="Liou S.-R."/>
            <person name="Plunkett G. III"/>
            <person name="Mayhew G.F."/>
            <person name="Rose D.J."/>
            <person name="Burland V."/>
            <person name="Kodoyianni V."/>
            <person name="Schwartz D.C."/>
            <person name="Blattner F.R."/>
        </authorList>
    </citation>
    <scope>NUCLEOTIDE SEQUENCE [LARGE SCALE GENOMIC DNA]</scope>
    <source>
        <strain>ATCC 700931 / Ty2</strain>
    </source>
</reference>
<protein>
    <recommendedName>
        <fullName evidence="1">Mannosyl-3-phosphoglycerate phosphatase</fullName>
        <shortName evidence="1">MPGP</shortName>
        <ecNumber evidence="1">3.1.3.70</ecNumber>
    </recommendedName>
</protein>
<dbReference type="EC" id="3.1.3.70" evidence="1"/>
<dbReference type="EMBL" id="AL513382">
    <property type="protein sequence ID" value="CAD05733.1"/>
    <property type="molecule type" value="Genomic_DNA"/>
</dbReference>
<dbReference type="EMBL" id="AE014613">
    <property type="protein sequence ID" value="AAO68570.1"/>
    <property type="molecule type" value="Genomic_DNA"/>
</dbReference>
<dbReference type="RefSeq" id="NP_456546.1">
    <property type="nucleotide sequence ID" value="NC_003198.1"/>
</dbReference>
<dbReference type="RefSeq" id="WP_000948794.1">
    <property type="nucleotide sequence ID" value="NZ_WSUR01000004.1"/>
</dbReference>
<dbReference type="SMR" id="P65418"/>
<dbReference type="STRING" id="220341.gene:17586102"/>
<dbReference type="KEGG" id="stt:t0892"/>
<dbReference type="KEGG" id="sty:STY2193"/>
<dbReference type="PATRIC" id="fig|220341.7.peg.2209"/>
<dbReference type="eggNOG" id="COG3769">
    <property type="taxonomic scope" value="Bacteria"/>
</dbReference>
<dbReference type="HOGENOM" id="CLU_063016_0_0_6"/>
<dbReference type="OMA" id="KGNRMSH"/>
<dbReference type="OrthoDB" id="193379at2"/>
<dbReference type="Proteomes" id="UP000000541">
    <property type="component" value="Chromosome"/>
</dbReference>
<dbReference type="Proteomes" id="UP000002670">
    <property type="component" value="Chromosome"/>
</dbReference>
<dbReference type="GO" id="GO:0005829">
    <property type="term" value="C:cytosol"/>
    <property type="evidence" value="ECO:0007669"/>
    <property type="project" value="TreeGrafter"/>
</dbReference>
<dbReference type="GO" id="GO:0000287">
    <property type="term" value="F:magnesium ion binding"/>
    <property type="evidence" value="ECO:0007669"/>
    <property type="project" value="TreeGrafter"/>
</dbReference>
<dbReference type="GO" id="GO:0050531">
    <property type="term" value="F:mannosyl-3-phosphoglycerate phosphatase activity"/>
    <property type="evidence" value="ECO:0007669"/>
    <property type="project" value="UniProtKB-UniRule"/>
</dbReference>
<dbReference type="GO" id="GO:0051479">
    <property type="term" value="P:mannosylglycerate biosynthetic process"/>
    <property type="evidence" value="ECO:0007669"/>
    <property type="project" value="InterPro"/>
</dbReference>
<dbReference type="CDD" id="cd07507">
    <property type="entry name" value="HAD_Pase"/>
    <property type="match status" value="1"/>
</dbReference>
<dbReference type="Gene3D" id="3.40.50.1000">
    <property type="entry name" value="HAD superfamily/HAD-like"/>
    <property type="match status" value="1"/>
</dbReference>
<dbReference type="Gene3D" id="3.30.980.20">
    <property type="entry name" value="Putative mannosyl-3-phosphoglycerate phosphatase, domain 2"/>
    <property type="match status" value="1"/>
</dbReference>
<dbReference type="HAMAP" id="MF_00617">
    <property type="entry name" value="MPGP_rel"/>
    <property type="match status" value="1"/>
</dbReference>
<dbReference type="InterPro" id="IPR036412">
    <property type="entry name" value="HAD-like_sf"/>
</dbReference>
<dbReference type="InterPro" id="IPR006381">
    <property type="entry name" value="HAD-SF-IIB-MPGP"/>
</dbReference>
<dbReference type="InterPro" id="IPR006379">
    <property type="entry name" value="HAD-SF_hydro_IIB"/>
</dbReference>
<dbReference type="InterPro" id="IPR023214">
    <property type="entry name" value="HAD_sf"/>
</dbReference>
<dbReference type="InterPro" id="IPR012815">
    <property type="entry name" value="MPG_Pase"/>
</dbReference>
<dbReference type="NCBIfam" id="TIGR01484">
    <property type="entry name" value="HAD-SF-IIB"/>
    <property type="match status" value="1"/>
</dbReference>
<dbReference type="NCBIfam" id="TIGR01486">
    <property type="entry name" value="HAD-SF-IIB-MPGP"/>
    <property type="match status" value="1"/>
</dbReference>
<dbReference type="NCBIfam" id="TIGR02463">
    <property type="entry name" value="MPGP_rel"/>
    <property type="match status" value="1"/>
</dbReference>
<dbReference type="NCBIfam" id="NF002976">
    <property type="entry name" value="PRK03669.1"/>
    <property type="match status" value="1"/>
</dbReference>
<dbReference type="PANTHER" id="PTHR10000:SF8">
    <property type="entry name" value="HAD SUPERFAMILY HYDROLASE-LIKE, TYPE 3"/>
    <property type="match status" value="1"/>
</dbReference>
<dbReference type="PANTHER" id="PTHR10000">
    <property type="entry name" value="PHOSPHOSERINE PHOSPHATASE"/>
    <property type="match status" value="1"/>
</dbReference>
<dbReference type="Pfam" id="PF08282">
    <property type="entry name" value="Hydrolase_3"/>
    <property type="match status" value="1"/>
</dbReference>
<dbReference type="SFLD" id="SFLDG01142">
    <property type="entry name" value="C2.B.2:_Mannosyl-3-phosphoglyc"/>
    <property type="match status" value="1"/>
</dbReference>
<dbReference type="SFLD" id="SFLDG01140">
    <property type="entry name" value="C2.B:_Phosphomannomutase_and_P"/>
    <property type="match status" value="1"/>
</dbReference>
<dbReference type="SUPFAM" id="SSF56784">
    <property type="entry name" value="HAD-like"/>
    <property type="match status" value="1"/>
</dbReference>
<keyword id="KW-0963">Cytoplasm</keyword>
<keyword id="KW-0378">Hydrolase</keyword>
<keyword id="KW-0460">Magnesium</keyword>
<keyword id="KW-0479">Metal-binding</keyword>
<proteinExistence type="inferred from homology"/>
<sequence>MLSIHDPLLIFTDLDGTLLNSHTFEWQPAAPWLTRLHESGVPVILCSSKTAAEMLQLQTTLNLQGLPLIAENGAVIQLDVHWEDHPNYPRLIAGISHNEIRLVLHKLREKEQFKFTTFDDVDDQVISEWTGLNRAQSALTRLHEASVSLIWRDSDERMAQFVARLNDLGLQFVHGARFWHVLDASAGKDQAANWLIEAYRRQWRARPLTLGLGDGPNDAPLLDVMDYAVVVKGLNREGVHLRNDDPQRVYRSQNEGPDGWREGMDYFFSRS</sequence>
<organism>
    <name type="scientific">Salmonella typhi</name>
    <dbReference type="NCBI Taxonomy" id="90370"/>
    <lineage>
        <taxon>Bacteria</taxon>
        <taxon>Pseudomonadati</taxon>
        <taxon>Pseudomonadota</taxon>
        <taxon>Gammaproteobacteria</taxon>
        <taxon>Enterobacterales</taxon>
        <taxon>Enterobacteriaceae</taxon>
        <taxon>Salmonella</taxon>
    </lineage>
</organism>